<evidence type="ECO:0000250" key="1">
    <source>
        <dbReference type="UniProtKB" id="A0A0H2ZNH9"/>
    </source>
</evidence>
<evidence type="ECO:0000250" key="2">
    <source>
        <dbReference type="UniProtKB" id="Q9RDT3"/>
    </source>
</evidence>
<evidence type="ECO:0000255" key="3"/>
<evidence type="ECO:0000255" key="4">
    <source>
        <dbReference type="PROSITE-ProRule" id="PRU00102"/>
    </source>
</evidence>
<evidence type="ECO:0000255" key="5">
    <source>
        <dbReference type="PROSITE-ProRule" id="PRU00107"/>
    </source>
</evidence>
<evidence type="ECO:0000255" key="6">
    <source>
        <dbReference type="PROSITE-ProRule" id="PRU00140"/>
    </source>
</evidence>
<evidence type="ECO:0000255" key="7">
    <source>
        <dbReference type="PROSITE-ProRule" id="PRU00141"/>
    </source>
</evidence>
<evidence type="ECO:0000269" key="8">
    <source>
    </source>
</evidence>
<evidence type="ECO:0000269" key="9">
    <source>
    </source>
</evidence>
<evidence type="ECO:0000269" key="10">
    <source>
    </source>
</evidence>
<evidence type="ECO:0000303" key="11">
    <source>
    </source>
</evidence>
<evidence type="ECO:0000303" key="12">
    <source>
    </source>
</evidence>
<evidence type="ECO:0000305" key="13"/>
<evidence type="ECO:0000305" key="14">
    <source>
    </source>
</evidence>
<evidence type="ECO:0000305" key="15">
    <source>
    </source>
</evidence>
<evidence type="ECO:0000305" key="16">
    <source>
    </source>
</evidence>
<evidence type="ECO:0000312" key="17">
    <source>
        <dbReference type="EMBL" id="AAK99909.1"/>
    </source>
</evidence>
<evidence type="ECO:0000312" key="18">
    <source>
        <dbReference type="Proteomes" id="UP000000586"/>
    </source>
</evidence>
<gene>
    <name evidence="12" type="primary">walK</name>
    <name evidence="17" type="synonym">hk02</name>
    <name evidence="11 12" type="synonym">vicK</name>
    <name evidence="12" type="synonym">yycG</name>
    <name evidence="17" type="ordered locus">spr1106</name>
</gene>
<name>WALK_STRR6</name>
<dbReference type="EC" id="2.7.13.3" evidence="8 9"/>
<dbReference type="EC" id="3.9.1.-" evidence="8 9"/>
<dbReference type="EMBL" id="AE007317">
    <property type="protein sequence ID" value="AAK99909.1"/>
    <property type="molecule type" value="Genomic_DNA"/>
</dbReference>
<dbReference type="PIR" id="A99010">
    <property type="entry name" value="A99010"/>
</dbReference>
<dbReference type="RefSeq" id="NP_358699.1">
    <property type="nucleotide sequence ID" value="NC_003098.1"/>
</dbReference>
<dbReference type="RefSeq" id="WP_000886210.1">
    <property type="nucleotide sequence ID" value="NC_003098.1"/>
</dbReference>
<dbReference type="SMR" id="Q8DPL8"/>
<dbReference type="STRING" id="171101.spr1106"/>
<dbReference type="iPTMnet" id="Q8DPL8"/>
<dbReference type="GeneID" id="45653483"/>
<dbReference type="KEGG" id="spr:spr1106"/>
<dbReference type="PATRIC" id="fig|171101.6.peg.1201"/>
<dbReference type="eggNOG" id="COG5002">
    <property type="taxonomic scope" value="Bacteria"/>
</dbReference>
<dbReference type="HOGENOM" id="CLU_000445_89_2_9"/>
<dbReference type="BRENDA" id="2.7.13.3">
    <property type="organism ID" value="1960"/>
</dbReference>
<dbReference type="Proteomes" id="UP000000586">
    <property type="component" value="Chromosome"/>
</dbReference>
<dbReference type="GO" id="GO:0016020">
    <property type="term" value="C:membrane"/>
    <property type="evidence" value="ECO:0007669"/>
    <property type="project" value="UniProtKB-SubCell"/>
</dbReference>
<dbReference type="GO" id="GO:0016787">
    <property type="term" value="F:hydrolase activity"/>
    <property type="evidence" value="ECO:0007669"/>
    <property type="project" value="UniProtKB-KW"/>
</dbReference>
<dbReference type="GO" id="GO:0000156">
    <property type="term" value="F:phosphorelay response regulator activity"/>
    <property type="evidence" value="ECO:0000318"/>
    <property type="project" value="GO_Central"/>
</dbReference>
<dbReference type="GO" id="GO:0000155">
    <property type="term" value="F:phosphorelay sensor kinase activity"/>
    <property type="evidence" value="ECO:0007669"/>
    <property type="project" value="InterPro"/>
</dbReference>
<dbReference type="GO" id="GO:0030295">
    <property type="term" value="F:protein kinase activator activity"/>
    <property type="evidence" value="ECO:0000318"/>
    <property type="project" value="GO_Central"/>
</dbReference>
<dbReference type="GO" id="GO:0019901">
    <property type="term" value="F:protein kinase binding"/>
    <property type="evidence" value="ECO:0000353"/>
    <property type="project" value="UniProtKB"/>
</dbReference>
<dbReference type="GO" id="GO:0007234">
    <property type="term" value="P:osmosensory signaling via phosphorelay pathway"/>
    <property type="evidence" value="ECO:0000318"/>
    <property type="project" value="GO_Central"/>
</dbReference>
<dbReference type="GO" id="GO:0006355">
    <property type="term" value="P:regulation of DNA-templated transcription"/>
    <property type="evidence" value="ECO:0000315"/>
    <property type="project" value="UniProtKB"/>
</dbReference>
<dbReference type="GO" id="GO:0007165">
    <property type="term" value="P:signal transduction"/>
    <property type="evidence" value="ECO:0000315"/>
    <property type="project" value="UniProtKB"/>
</dbReference>
<dbReference type="CDD" id="cd00075">
    <property type="entry name" value="HATPase"/>
    <property type="match status" value="1"/>
</dbReference>
<dbReference type="CDD" id="cd00082">
    <property type="entry name" value="HisKA"/>
    <property type="match status" value="1"/>
</dbReference>
<dbReference type="CDD" id="cd00130">
    <property type="entry name" value="PAS"/>
    <property type="match status" value="1"/>
</dbReference>
<dbReference type="FunFam" id="3.30.565.10:FF:000006">
    <property type="entry name" value="Sensor histidine kinase WalK"/>
    <property type="match status" value="1"/>
</dbReference>
<dbReference type="FunFam" id="1.10.8.500:FF:000005">
    <property type="entry name" value="Sensor histidine kinase YycG"/>
    <property type="match status" value="1"/>
</dbReference>
<dbReference type="FunFam" id="1.10.287.130:FF:000001">
    <property type="entry name" value="Two-component sensor histidine kinase"/>
    <property type="match status" value="1"/>
</dbReference>
<dbReference type="Gene3D" id="1.10.287.130">
    <property type="match status" value="1"/>
</dbReference>
<dbReference type="Gene3D" id="1.10.8.500">
    <property type="entry name" value="HAMP domain in histidine kinase"/>
    <property type="match status" value="1"/>
</dbReference>
<dbReference type="Gene3D" id="3.30.565.10">
    <property type="entry name" value="Histidine kinase-like ATPase, C-terminal domain"/>
    <property type="match status" value="1"/>
</dbReference>
<dbReference type="Gene3D" id="3.30.450.20">
    <property type="entry name" value="PAS domain"/>
    <property type="match status" value="1"/>
</dbReference>
<dbReference type="InterPro" id="IPR050351">
    <property type="entry name" value="2-comp_sensor_kinase"/>
</dbReference>
<dbReference type="InterPro" id="IPR003660">
    <property type="entry name" value="HAMP_dom"/>
</dbReference>
<dbReference type="InterPro" id="IPR036890">
    <property type="entry name" value="HATPase_C_sf"/>
</dbReference>
<dbReference type="InterPro" id="IPR005467">
    <property type="entry name" value="His_kinase_dom"/>
</dbReference>
<dbReference type="InterPro" id="IPR003661">
    <property type="entry name" value="HisK_dim/P_dom"/>
</dbReference>
<dbReference type="InterPro" id="IPR036097">
    <property type="entry name" value="HisK_dim/P_sf"/>
</dbReference>
<dbReference type="InterPro" id="IPR000014">
    <property type="entry name" value="PAS"/>
</dbReference>
<dbReference type="InterPro" id="IPR000700">
    <property type="entry name" value="PAS-assoc_C"/>
</dbReference>
<dbReference type="InterPro" id="IPR035965">
    <property type="entry name" value="PAS-like_dom_sf"/>
</dbReference>
<dbReference type="InterPro" id="IPR013767">
    <property type="entry name" value="PAS_fold"/>
</dbReference>
<dbReference type="InterPro" id="IPR004358">
    <property type="entry name" value="Sig_transdc_His_kin-like_C"/>
</dbReference>
<dbReference type="InterPro" id="IPR054693">
    <property type="entry name" value="WalK_HAMP"/>
</dbReference>
<dbReference type="NCBIfam" id="NF033093">
    <property type="entry name" value="HK_VicK"/>
    <property type="match status" value="1"/>
</dbReference>
<dbReference type="NCBIfam" id="TIGR00229">
    <property type="entry name" value="sensory_box"/>
    <property type="match status" value="1"/>
</dbReference>
<dbReference type="PANTHER" id="PTHR45453">
    <property type="entry name" value="PHOSPHATE REGULON SENSOR PROTEIN PHOR"/>
    <property type="match status" value="1"/>
</dbReference>
<dbReference type="PANTHER" id="PTHR45453:SF1">
    <property type="entry name" value="PHOSPHATE REGULON SENSOR PROTEIN PHOR"/>
    <property type="match status" value="1"/>
</dbReference>
<dbReference type="Pfam" id="PF22610">
    <property type="entry name" value="CovS-like_HAMP"/>
    <property type="match status" value="1"/>
</dbReference>
<dbReference type="Pfam" id="PF02518">
    <property type="entry name" value="HATPase_c"/>
    <property type="match status" value="1"/>
</dbReference>
<dbReference type="Pfam" id="PF00512">
    <property type="entry name" value="HisKA"/>
    <property type="match status" value="1"/>
</dbReference>
<dbReference type="Pfam" id="PF00989">
    <property type="entry name" value="PAS"/>
    <property type="match status" value="1"/>
</dbReference>
<dbReference type="PRINTS" id="PR00344">
    <property type="entry name" value="BCTRLSENSOR"/>
</dbReference>
<dbReference type="SMART" id="SM00387">
    <property type="entry name" value="HATPase_c"/>
    <property type="match status" value="1"/>
</dbReference>
<dbReference type="SMART" id="SM00388">
    <property type="entry name" value="HisKA"/>
    <property type="match status" value="1"/>
</dbReference>
<dbReference type="SMART" id="SM00091">
    <property type="entry name" value="PAS"/>
    <property type="match status" value="1"/>
</dbReference>
<dbReference type="SUPFAM" id="SSF55874">
    <property type="entry name" value="ATPase domain of HSP90 chaperone/DNA topoisomerase II/histidine kinase"/>
    <property type="match status" value="1"/>
</dbReference>
<dbReference type="SUPFAM" id="SSF47384">
    <property type="entry name" value="Homodimeric domain of signal transducing histidine kinase"/>
    <property type="match status" value="1"/>
</dbReference>
<dbReference type="SUPFAM" id="SSF55785">
    <property type="entry name" value="PYP-like sensor domain (PAS domain)"/>
    <property type="match status" value="1"/>
</dbReference>
<dbReference type="PROSITE" id="PS50885">
    <property type="entry name" value="HAMP"/>
    <property type="match status" value="1"/>
</dbReference>
<dbReference type="PROSITE" id="PS50109">
    <property type="entry name" value="HIS_KIN"/>
    <property type="match status" value="1"/>
</dbReference>
<dbReference type="PROSITE" id="PS50113">
    <property type="entry name" value="PAC"/>
    <property type="match status" value="1"/>
</dbReference>
<dbReference type="PROSITE" id="PS50112">
    <property type="entry name" value="PAS"/>
    <property type="match status" value="1"/>
</dbReference>
<accession>Q8DPL8</accession>
<protein>
    <recommendedName>
        <fullName evidence="15">Sensor histidine protein kinase/phosphatase WalK</fullName>
        <ecNumber evidence="8 9">2.7.13.3</ecNumber>
        <ecNumber evidence="8 9">3.9.1.-</ecNumber>
    </recommendedName>
</protein>
<organism evidence="18">
    <name type="scientific">Streptococcus pneumoniae (strain ATCC BAA-255 / R6)</name>
    <dbReference type="NCBI Taxonomy" id="171101"/>
    <lineage>
        <taxon>Bacteria</taxon>
        <taxon>Bacillati</taxon>
        <taxon>Bacillota</taxon>
        <taxon>Bacilli</taxon>
        <taxon>Lactobacillales</taxon>
        <taxon>Streptococcaceae</taxon>
        <taxon>Streptococcus</taxon>
    </lineage>
</organism>
<proteinExistence type="evidence at protein level"/>
<comment type="function">
    <text evidence="1 2 8 9 10">Member of the two-component regulatory system WalK/WalR that regulates genes involved in cell wall metabolism (By similarity). Functions as a sensor protein kinase which is autophosphorylated at a histidine residue and transfers its phosphate group to WalR (PubMed:20190050, PubMed:23013245). In turn, WalR binds to the upstream promoter regions of target genes to positively and negatively regulate their expression (By similarity). Required to maintain expression of WalRK regulon genes in exponentially growing cells, including peptidoglycan hydrolase pcsB (PubMed:27902439). Phosphorylates WalR and also capable of dephosphorylation of WalR (PubMed:20190050, PubMed:23013245, PubMed:27902439). WalK phosphatase activity is probably involved in preventing cross-talk from PnpS and other non-cognate sensor kinases during exponential growth (By similarity).</text>
</comment>
<comment type="catalytic activity">
    <reaction evidence="8 9">
        <text>ATP + protein L-histidine = ADP + protein N-phospho-L-histidine.</text>
        <dbReference type="EC" id="2.7.13.3"/>
    </reaction>
</comment>
<comment type="activity regulation">
    <text evidence="14">Autophosphorylation is decreased in vitro by dithiothreitol (DTT), perhaps because of disruption of disulfide bond formation and covalent dimerization.</text>
</comment>
<comment type="biophysicochemical properties">
    <kinetics>
        <KM evidence="8">42 uM for ATP (at pH 7.8 and 25 degrees Celsius)</KM>
        <text evidence="8">Kinetic parameters were determined with a truncated form of WalK, which includes only the cytoplasmic domain and not the short extracellular domain and the transmembrane region. kcat is 0.08 sec(-1) for ATP (at pH 7.8 and 25 degrees Celsius).</text>
    </kinetics>
</comment>
<comment type="subunit">
    <text evidence="12">May form homodimers (PubMed:27902439). May interact with serine/threonine-protein kinase StkP; the interaction may play a role in regulating Walk signal transduction (PubMed:27902439).</text>
</comment>
<comment type="subcellular location">
    <subcellularLocation>
        <location evidence="3">Membrane</location>
        <topology evidence="3">Single-pass type III membrane protein</topology>
    </subcellularLocation>
</comment>
<comment type="domain">
    <text evidence="10">Transmembrane domain is involved in signal sensing or transduction.</text>
</comment>
<comment type="domain">
    <text evidence="8">PAS domain is involved in phosphatase activity.</text>
</comment>
<comment type="PTM">
    <text evidence="8 9">Autophosphorylated.</text>
</comment>
<comment type="disruption phenotype">
    <text evidence="10">Almost abolishes transcription of the peptidoglycan hydrolase pcsB gene; similar phenotype with simultaneous deletion of serine/threonine-protein kinase stkP (PubMed:27902439). Simultaneous deletion of response regulator pnpR increases transcription of pcsB; similar phenotype when combined with simultaneous deletion of stkP (PubMed:27902439).</text>
</comment>
<reference evidence="18" key="1">
    <citation type="journal article" date="2001" name="J. Bacteriol.">
        <title>Genome of the bacterium Streptococcus pneumoniae strain R6.</title>
        <authorList>
            <person name="Hoskins J."/>
            <person name="Alborn W.E. Jr."/>
            <person name="Arnold J."/>
            <person name="Blaszczak L.C."/>
            <person name="Burgett S."/>
            <person name="DeHoff B.S."/>
            <person name="Estrem S.T."/>
            <person name="Fritz L."/>
            <person name="Fu D.-J."/>
            <person name="Fuller W."/>
            <person name="Geringer C."/>
            <person name="Gilmour R."/>
            <person name="Glass J.S."/>
            <person name="Khoja H."/>
            <person name="Kraft A.R."/>
            <person name="Lagace R.E."/>
            <person name="LeBlanc D.J."/>
            <person name="Lee L.N."/>
            <person name="Lefkowitz E.J."/>
            <person name="Lu J."/>
            <person name="Matsushima P."/>
            <person name="McAhren S.M."/>
            <person name="McHenney M."/>
            <person name="McLeaster K."/>
            <person name="Mundy C.W."/>
            <person name="Nicas T.I."/>
            <person name="Norris F.H."/>
            <person name="O'Gara M."/>
            <person name="Peery R.B."/>
            <person name="Robertson G.T."/>
            <person name="Rockey P."/>
            <person name="Sun P.-M."/>
            <person name="Winkler M.E."/>
            <person name="Yang Y."/>
            <person name="Young-Bellido M."/>
            <person name="Zhao G."/>
            <person name="Zook C.A."/>
            <person name="Baltz R.H."/>
            <person name="Jaskunas S.R."/>
            <person name="Rosteck P.R. Jr."/>
            <person name="Skatrud P.L."/>
            <person name="Glass J.I."/>
        </authorList>
    </citation>
    <scope>NUCLEOTIDE SEQUENCE [LARGE SCALE GENOMIC DNA]</scope>
    <source>
        <strain evidence="18">ATCC BAA-255 / R6</strain>
    </source>
</reference>
<reference evidence="13" key="2">
    <citation type="journal article" date="2010" name="J. Bacteriol.">
        <title>Kinetic characterization of the WalRKSpn (VicRK) two-component system of Streptococcus pneumoniae: dependence of WalKSpn (VicK) phosphatase activity on its PAS domain.</title>
        <authorList>
            <person name="Gutu A.D."/>
            <person name="Wayne K.J."/>
            <person name="Sham L.T."/>
            <person name="Winkler M.E."/>
        </authorList>
    </citation>
    <scope>FUNCTION</scope>
    <scope>CATALYTIC ACTIVITY</scope>
    <scope>ACTIVITY REGULATION</scope>
    <scope>BIOPHYSICOCHEMICAL PROPERTIES</scope>
    <scope>DOMAIN</scope>
    <scope>PHOSPHORYLATION AT HIS-218</scope>
    <scope>MUTAGENESIS OF 1-MET--ARG-35; 1-MET--VAL-195; 104-THR--ASP-198; 133-ASP--LEU-140; HIS-218 AND THR-222</scope>
</reference>
<reference evidence="13" key="3">
    <citation type="journal article" date="2012" name="Mol. Microbiol.">
        <title>Involvement of WalK (VicK) phosphatase activity in setting WalR (VicR) response regulator phosphorylation level and limiting cross-talk in Streptococcus pneumoniae D39 cells.</title>
        <authorList>
            <person name="Wayne K.J."/>
            <person name="Li S."/>
            <person name="Kazmierczak K.M."/>
            <person name="Tsui H.C."/>
            <person name="Winkler M.E."/>
        </authorList>
    </citation>
    <scope>CATALYTIC ACTIVITY</scope>
    <scope>PHOSPHORYLATION AT HIS-218</scope>
    <scope>MUTAGENESIS OF VAL-216; SER-217; ARG-221; THR-222 AND PRO-223</scope>
</reference>
<reference evidence="13" key="4">
    <citation type="journal article" date="2017" name="Microbiology">
        <title>Evidence that pneumococcal WalK is regulated by StkP through protein-protein interaction.</title>
        <authorList>
            <person name="Stamsaas G.A."/>
            <person name="Straume D."/>
            <person name="Salehian Z."/>
            <person name="Haavarstein L.S."/>
        </authorList>
    </citation>
    <scope>FUNCTION</scope>
    <scope>SUBUNIT</scope>
    <scope>INTERACTION WITH STPK</scope>
    <scope>DOMAIN</scope>
    <scope>DISRUPTION PHENOTYPE</scope>
    <scope>MUTAGENESIS OF 12-ARG--ASP-37; GLY-22; PHE-23; 33-GLU-ASN-34; GLU-33; 36-ARG-ASP-37 AND THR-222</scope>
    <source>
        <strain evidence="13">R6 / R704</strain>
    </source>
</reference>
<feature type="chain" id="PRO_0000458748" description="Sensor histidine protein kinase/phosphatase WalK">
    <location>
        <begin position="1"/>
        <end position="449"/>
    </location>
</feature>
<feature type="topological domain" description="Extracellular" evidence="16">
    <location>
        <begin position="1"/>
        <end position="13"/>
    </location>
</feature>
<feature type="transmembrane region" description="Helical" evidence="3">
    <location>
        <begin position="14"/>
        <end position="34"/>
    </location>
</feature>
<feature type="topological domain" description="Cytoplasmic" evidence="16">
    <location>
        <begin position="35"/>
        <end position="449"/>
    </location>
</feature>
<feature type="domain" description="HAMP" evidence="4">
    <location>
        <begin position="35"/>
        <end position="87"/>
    </location>
</feature>
<feature type="domain" description="PAS" evidence="6">
    <location>
        <begin position="92"/>
        <end position="158"/>
    </location>
</feature>
<feature type="domain" description="PAC" evidence="7">
    <location>
        <begin position="157"/>
        <end position="211"/>
    </location>
</feature>
<feature type="domain" description="Histidine kinase" evidence="5">
    <location>
        <begin position="215"/>
        <end position="435"/>
    </location>
</feature>
<feature type="modified residue" description="Phosphohistidine; by autocatalysis" evidence="5 8">
    <location>
        <position position="218"/>
    </location>
</feature>
<feature type="mutagenesis site" description="Retains autophosphorylation." evidence="8">
    <location>
        <begin position="1"/>
        <end position="195"/>
    </location>
</feature>
<feature type="mutagenesis site" description="Retains autophosphorylation." evidence="8">
    <location>
        <begin position="1"/>
        <end position="35"/>
    </location>
</feature>
<feature type="mutagenesis site" description="Increases transcription of the peptidoglycan hydrolase pcsB gene." evidence="10">
    <original>RDFIFILILLGFILVVTLLLLENRRD</original>
    <variation>AAFIFILILLGFILVVTLLLLENRAA</variation>
    <location>
        <begin position="12"/>
        <end position="37"/>
    </location>
</feature>
<feature type="mutagenesis site" description="Reduces transcription of the peptidoglycan hydrolase pcsB gene." evidence="10">
    <original>G</original>
    <variation>A</variation>
    <location>
        <position position="22"/>
    </location>
</feature>
<feature type="mutagenesis site" description="Reduces transcription of the peptidoglycan hydrolase pcsB gene. Does not negatively affect WalK expression or membrane insertion." evidence="10">
    <original>F</original>
    <variation>A</variation>
    <location>
        <position position="23"/>
    </location>
</feature>
<feature type="mutagenesis site" description="Reduces transcription of the peptidoglycan hydrolase pcsB gene." evidence="10">
    <original>EN</original>
    <variation>AA</variation>
    <location>
        <begin position="33"/>
        <end position="34"/>
    </location>
</feature>
<feature type="mutagenesis site" description="Reduces transcription of the peptidoglycan hydrolase pcsB gene." evidence="10">
    <original>E</original>
    <variation>A</variation>
    <location>
        <position position="33"/>
    </location>
</feature>
<feature type="mutagenesis site" description="Reduces transcription of the peptidoglycan hydrolase pcsB gene." evidence="10">
    <original>RD</original>
    <variation>AA</variation>
    <location>
        <begin position="36"/>
        <end position="37"/>
    </location>
</feature>
<feature type="mutagenesis site" description="Reduces autophosphorylation. Reduces phosphatase activity." evidence="8">
    <location>
        <begin position="104"/>
        <end position="198"/>
    </location>
</feature>
<feature type="mutagenesis site" description="No effect on autophosphorylation." evidence="8">
    <original>DVLNRSIL</original>
    <variation>NVLYRSIR</variation>
    <location>
        <begin position="133"/>
        <end position="140"/>
    </location>
</feature>
<feature type="mutagenesis site" description="Severely reduces autophosphorylation." evidence="9">
    <original>V</original>
    <variation>G</variation>
    <location>
        <position position="216"/>
    </location>
</feature>
<feature type="mutagenesis site" description="Severely reduces autophosphorylation." evidence="9">
    <original>S</original>
    <variation>D</variation>
    <location>
        <position position="217"/>
    </location>
</feature>
<feature type="mutagenesis site" description="Abolishes autophosphorylation. Reduces phosphatase activity by about 12-fold." evidence="8">
    <original>H</original>
    <variation>A</variation>
    <location>
        <position position="218"/>
    </location>
</feature>
<feature type="mutagenesis site" description="Severely reduces autophosphorylation." evidence="9">
    <original>R</original>
    <variation>D</variation>
    <location>
        <position position="221"/>
    </location>
</feature>
<feature type="mutagenesis site" description="Greatly reduces phosphatase activity. Increases transcription of the peptidoglycan hydrolase pcsB gene; simultaneous deletion of serine/threonine kinase stkP has no effect." evidence="9 10">
    <original>T</original>
    <variation>A</variation>
    <location>
        <position position="222"/>
    </location>
</feature>
<feature type="mutagenesis site" description="Severely reduces autophosphorylation." evidence="9">
    <original>T</original>
    <variation>D</variation>
    <location>
        <position position="222"/>
    </location>
</feature>
<feature type="mutagenesis site" description="Reduces autophosphorylation. Reduces phosphatase activity by about 12-fold." evidence="8 9">
    <original>T</original>
    <variation>R</variation>
    <location>
        <position position="222"/>
    </location>
</feature>
<feature type="mutagenesis site" description="Severely reduces autophosphorylation." evidence="9">
    <original>P</original>
    <variation>A</variation>
    <location>
        <position position="223"/>
    </location>
</feature>
<feature type="mutagenesis site" description="Severely reduces autophosphorylation." evidence="9">
    <original>P</original>
    <variation>S</variation>
    <location>
        <position position="223"/>
    </location>
</feature>
<sequence length="449" mass="51712">MLDLLKQTIFTRDFIFILILLGFILVVTLLLLENRRDNIQLKQINQKVKDLIAGDYSKVLDMQGGSEITNITNNLNDLSEVIRLTQENLEQESKRLNSILFYMTDGVLATNRRGQIIMINDTAKKQLGLVKEDVLNRSILELLKIEENYELRDLITQSPELLLDSQDINGEYLNLRVRFALIRRESGFISGLVAVLHDTTEQEKEERERRLFVSNVSHELRTPLTSVKSYLEALDEGALCETVAPDFIKVSLDETNRMMRMVTDLLHLSRIDNATSHLDVELINFTAFITFILNRFDKMKGQEKEKKYELVRDYPINSIWMEIDTDKMTQVVDNILNNAIKYSPDGGKITVRMKTTEDQMILSISDHGLGIPKQDLPRIFDRFYRVDRARSRAQGGTGLGLSIAKEIIKQHKGFIWAKSEYGKGSTFTIVLPYDKDAVKEEVWEDEVED</sequence>
<keyword id="KW-0378">Hydrolase</keyword>
<keyword id="KW-0418">Kinase</keyword>
<keyword id="KW-0472">Membrane</keyword>
<keyword id="KW-0597">Phosphoprotein</keyword>
<keyword id="KW-1185">Reference proteome</keyword>
<keyword id="KW-0808">Transferase</keyword>
<keyword id="KW-0812">Transmembrane</keyword>
<keyword id="KW-1133">Transmembrane helix</keyword>
<keyword id="KW-0902">Two-component regulatory system</keyword>